<feature type="chain" id="PRO_0000081224" description="Probable transcriptional regulatory protein SilR">
    <location>
        <begin position="1"/>
        <end position="228"/>
    </location>
</feature>
<feature type="domain" description="Response regulatory" evidence="1">
    <location>
        <begin position="2"/>
        <end position="116"/>
    </location>
</feature>
<feature type="DNA-binding region" description="OmpR/PhoB-type" evidence="2">
    <location>
        <begin position="125"/>
        <end position="225"/>
    </location>
</feature>
<feature type="modified residue" description="4-aspartylphosphate" evidence="1">
    <location>
        <position position="51"/>
    </location>
</feature>
<proteinExistence type="inferred from homology"/>
<protein>
    <recommendedName>
        <fullName>Probable transcriptional regulatory protein SilR</fullName>
    </recommendedName>
</protein>
<accession>Q9ZHD3</accession>
<evidence type="ECO:0000255" key="1">
    <source>
        <dbReference type="PROSITE-ProRule" id="PRU00169"/>
    </source>
</evidence>
<evidence type="ECO:0000255" key="2">
    <source>
        <dbReference type="PROSITE-ProRule" id="PRU01091"/>
    </source>
</evidence>
<evidence type="ECO:0000305" key="3"/>
<sequence length="228" mass="25463">MKILIVEDDIKTGEYLSKGLTEAGFVVDHADNGLTGYHLAMTAEYDLVILDIMLPDVNGWDIIRMLRSAGKGMPVLLLTALGTIEHRVKGLELGADDYLVKPFAFAELLARVRTLLRRGNTMITESQLKVADLSVDLVSRKVSRAGNRIVLTSKEFSLLEFFIRHQGEVLPRSLIAFFMVWVHEFLTADTNAIDVAVKRLRAKIDNDYGTKLNQTVRGVGYMLEIPDA</sequence>
<comment type="function">
    <text>Component of the sil cation-efflux system that confers resistance to silver. Probable member of a two-component regulatory system SilS/SilR.</text>
</comment>
<comment type="subcellular location">
    <subcellularLocation>
        <location evidence="3">Cytoplasm</location>
    </subcellularLocation>
</comment>
<comment type="PTM">
    <text evidence="3">Phosphorylated by SilS.</text>
</comment>
<gene>
    <name type="primary">silR</name>
</gene>
<reference key="1">
    <citation type="journal article" date="1999" name="Nat. Med.">
        <title>Molecular basis for resistance to silver cations in Salmonella.</title>
        <authorList>
            <person name="Gupta A."/>
            <person name="Matsui K."/>
            <person name="Lo J.-F."/>
            <person name="Silver S."/>
        </authorList>
    </citation>
    <scope>NUCLEOTIDE SEQUENCE [GENOMIC DNA]</scope>
</reference>
<keyword id="KW-0963">Cytoplasm</keyword>
<keyword id="KW-0238">DNA-binding</keyword>
<keyword id="KW-0597">Phosphoprotein</keyword>
<keyword id="KW-0614">Plasmid</keyword>
<keyword id="KW-0804">Transcription</keyword>
<keyword id="KW-0805">Transcription regulation</keyword>
<keyword id="KW-0902">Two-component regulatory system</keyword>
<name>SILR_SALTM</name>
<organism>
    <name type="scientific">Salmonella typhimurium</name>
    <dbReference type="NCBI Taxonomy" id="90371"/>
    <lineage>
        <taxon>Bacteria</taxon>
        <taxon>Pseudomonadati</taxon>
        <taxon>Pseudomonadota</taxon>
        <taxon>Gammaproteobacteria</taxon>
        <taxon>Enterobacterales</taxon>
        <taxon>Enterobacteriaceae</taxon>
        <taxon>Salmonella</taxon>
    </lineage>
</organism>
<geneLocation type="plasmid">
    <name>pMG101</name>
</geneLocation>
<dbReference type="EMBL" id="AF067954">
    <property type="protein sequence ID" value="AAD11745.1"/>
    <property type="molecule type" value="Genomic_DNA"/>
</dbReference>
<dbReference type="SMR" id="Q9ZHD3"/>
<dbReference type="GO" id="GO:0005829">
    <property type="term" value="C:cytosol"/>
    <property type="evidence" value="ECO:0007669"/>
    <property type="project" value="TreeGrafter"/>
</dbReference>
<dbReference type="GO" id="GO:0032993">
    <property type="term" value="C:protein-DNA complex"/>
    <property type="evidence" value="ECO:0007669"/>
    <property type="project" value="TreeGrafter"/>
</dbReference>
<dbReference type="GO" id="GO:0000156">
    <property type="term" value="F:phosphorelay response regulator activity"/>
    <property type="evidence" value="ECO:0007669"/>
    <property type="project" value="TreeGrafter"/>
</dbReference>
<dbReference type="GO" id="GO:0000976">
    <property type="term" value="F:transcription cis-regulatory region binding"/>
    <property type="evidence" value="ECO:0007669"/>
    <property type="project" value="TreeGrafter"/>
</dbReference>
<dbReference type="GO" id="GO:0006355">
    <property type="term" value="P:regulation of DNA-templated transcription"/>
    <property type="evidence" value="ECO:0007669"/>
    <property type="project" value="InterPro"/>
</dbReference>
<dbReference type="CDD" id="cd19935">
    <property type="entry name" value="REC_OmpR_CusR-like"/>
    <property type="match status" value="1"/>
</dbReference>
<dbReference type="CDD" id="cd00383">
    <property type="entry name" value="trans_reg_C"/>
    <property type="match status" value="1"/>
</dbReference>
<dbReference type="FunFam" id="3.40.50.2300:FF:000001">
    <property type="entry name" value="DNA-binding response regulator PhoB"/>
    <property type="match status" value="1"/>
</dbReference>
<dbReference type="FunFam" id="1.10.10.10:FF:000005">
    <property type="entry name" value="Two-component system response regulator"/>
    <property type="match status" value="1"/>
</dbReference>
<dbReference type="Gene3D" id="3.40.50.2300">
    <property type="match status" value="1"/>
</dbReference>
<dbReference type="Gene3D" id="6.10.250.690">
    <property type="match status" value="1"/>
</dbReference>
<dbReference type="Gene3D" id="1.10.10.10">
    <property type="entry name" value="Winged helix-like DNA-binding domain superfamily/Winged helix DNA-binding domain"/>
    <property type="match status" value="1"/>
</dbReference>
<dbReference type="InterPro" id="IPR011006">
    <property type="entry name" value="CheY-like_superfamily"/>
</dbReference>
<dbReference type="InterPro" id="IPR006291">
    <property type="entry name" value="CusR-like"/>
</dbReference>
<dbReference type="InterPro" id="IPR001867">
    <property type="entry name" value="OmpR/PhoB-type_DNA-bd"/>
</dbReference>
<dbReference type="InterPro" id="IPR016032">
    <property type="entry name" value="Sig_transdc_resp-reg_C-effctor"/>
</dbReference>
<dbReference type="InterPro" id="IPR001789">
    <property type="entry name" value="Sig_transdc_resp-reg_receiver"/>
</dbReference>
<dbReference type="InterPro" id="IPR039420">
    <property type="entry name" value="WalR-like"/>
</dbReference>
<dbReference type="InterPro" id="IPR036388">
    <property type="entry name" value="WH-like_DNA-bd_sf"/>
</dbReference>
<dbReference type="NCBIfam" id="TIGR01387">
    <property type="entry name" value="cztR_silR_copR"/>
    <property type="match status" value="1"/>
</dbReference>
<dbReference type="NCBIfam" id="NF007346">
    <property type="entry name" value="PRK09836.1"/>
    <property type="match status" value="1"/>
</dbReference>
<dbReference type="PANTHER" id="PTHR48111">
    <property type="entry name" value="REGULATOR OF RPOS"/>
    <property type="match status" value="1"/>
</dbReference>
<dbReference type="PANTHER" id="PTHR48111:SF41">
    <property type="entry name" value="TRANSCRIPTIONAL REGULATORY PROTEIN CUSR-RELATED"/>
    <property type="match status" value="1"/>
</dbReference>
<dbReference type="Pfam" id="PF00072">
    <property type="entry name" value="Response_reg"/>
    <property type="match status" value="1"/>
</dbReference>
<dbReference type="Pfam" id="PF00486">
    <property type="entry name" value="Trans_reg_C"/>
    <property type="match status" value="1"/>
</dbReference>
<dbReference type="SMART" id="SM00448">
    <property type="entry name" value="REC"/>
    <property type="match status" value="1"/>
</dbReference>
<dbReference type="SMART" id="SM00862">
    <property type="entry name" value="Trans_reg_C"/>
    <property type="match status" value="1"/>
</dbReference>
<dbReference type="SUPFAM" id="SSF46894">
    <property type="entry name" value="C-terminal effector domain of the bipartite response regulators"/>
    <property type="match status" value="1"/>
</dbReference>
<dbReference type="SUPFAM" id="SSF52172">
    <property type="entry name" value="CheY-like"/>
    <property type="match status" value="1"/>
</dbReference>
<dbReference type="PROSITE" id="PS51755">
    <property type="entry name" value="OMPR_PHOB"/>
    <property type="match status" value="1"/>
</dbReference>
<dbReference type="PROSITE" id="PS50110">
    <property type="entry name" value="RESPONSE_REGULATORY"/>
    <property type="match status" value="1"/>
</dbReference>